<accession>P16510</accession>
<reference key="1">
    <citation type="journal article" date="1989" name="J. Virol.">
        <title>Avian-to-human transmission of the PB1 gene of influenza A viruses in the 1957 and 1968 pandemics.</title>
        <authorList>
            <person name="Kawaoka Y."/>
            <person name="Krauss S."/>
            <person name="Webster R.G."/>
        </authorList>
    </citation>
    <scope>NUCLEOTIDE SEQUENCE [GENOMIC RNA]</scope>
</reference>
<feature type="chain" id="PRO_0000078770" description="RNA-directed RNA polymerase catalytic subunit">
    <location>
        <begin position="1"/>
        <end position="757"/>
    </location>
</feature>
<feature type="domain" description="RdRp catalytic" evidence="2">
    <location>
        <begin position="286"/>
        <end position="483"/>
    </location>
</feature>
<feature type="region of interest" description="Promoter-binding site" evidence="2">
    <location>
        <begin position="249"/>
        <end position="256"/>
    </location>
</feature>
<feature type="short sequence motif" description="Nuclear localization signal" evidence="2">
    <location>
        <begin position="187"/>
        <end position="195"/>
    </location>
</feature>
<feature type="short sequence motif" description="Nuclear localization signal" evidence="2">
    <location>
        <begin position="203"/>
        <end position="216"/>
    </location>
</feature>
<dbReference type="EC" id="2.7.7.48" evidence="2"/>
<dbReference type="EMBL" id="M25930">
    <property type="protein sequence ID" value="AAA43639.1"/>
    <property type="molecule type" value="Genomic_RNA"/>
</dbReference>
<dbReference type="SMR" id="P16510"/>
<dbReference type="GO" id="GO:0030430">
    <property type="term" value="C:host cell cytoplasm"/>
    <property type="evidence" value="ECO:0007669"/>
    <property type="project" value="UniProtKB-SubCell"/>
</dbReference>
<dbReference type="GO" id="GO:0042025">
    <property type="term" value="C:host cell nucleus"/>
    <property type="evidence" value="ECO:0007669"/>
    <property type="project" value="UniProtKB-SubCell"/>
</dbReference>
<dbReference type="GO" id="GO:0000166">
    <property type="term" value="F:nucleotide binding"/>
    <property type="evidence" value="ECO:0007669"/>
    <property type="project" value="UniProtKB-UniRule"/>
</dbReference>
<dbReference type="GO" id="GO:0003723">
    <property type="term" value="F:RNA binding"/>
    <property type="evidence" value="ECO:0007669"/>
    <property type="project" value="InterPro"/>
</dbReference>
<dbReference type="GO" id="GO:0003968">
    <property type="term" value="F:RNA-directed RNA polymerase activity"/>
    <property type="evidence" value="ECO:0007669"/>
    <property type="project" value="UniProtKB-UniRule"/>
</dbReference>
<dbReference type="GO" id="GO:0006351">
    <property type="term" value="P:DNA-templated transcription"/>
    <property type="evidence" value="ECO:0007669"/>
    <property type="project" value="UniProtKB-UniRule"/>
</dbReference>
<dbReference type="GO" id="GO:0039657">
    <property type="term" value="P:symbiont-mediated suppression of host gene expression"/>
    <property type="evidence" value="ECO:0007669"/>
    <property type="project" value="UniProtKB-KW"/>
</dbReference>
<dbReference type="GO" id="GO:0039523">
    <property type="term" value="P:symbiont-mediated suppression of host mRNA transcription via inhibition of RNA polymerase II activity"/>
    <property type="evidence" value="ECO:0007669"/>
    <property type="project" value="UniProtKB-UniRule"/>
</dbReference>
<dbReference type="GO" id="GO:0039694">
    <property type="term" value="P:viral RNA genome replication"/>
    <property type="evidence" value="ECO:0007669"/>
    <property type="project" value="UniProtKB-UniRule"/>
</dbReference>
<dbReference type="GO" id="GO:0019083">
    <property type="term" value="P:viral transcription"/>
    <property type="evidence" value="ECO:0007669"/>
    <property type="project" value="UniProtKB-KW"/>
</dbReference>
<dbReference type="Gene3D" id="6.10.140.720">
    <property type="match status" value="1"/>
</dbReference>
<dbReference type="HAMAP" id="MF_04065">
    <property type="entry name" value="INFV_RDRP"/>
    <property type="match status" value="1"/>
</dbReference>
<dbReference type="InterPro" id="IPR007099">
    <property type="entry name" value="RNA-dir_pol_NSvirus"/>
</dbReference>
<dbReference type="InterPro" id="IPR001407">
    <property type="entry name" value="RNA_pol_PB1_influenza"/>
</dbReference>
<dbReference type="Pfam" id="PF00602">
    <property type="entry name" value="Flu_PB1"/>
    <property type="match status" value="1"/>
</dbReference>
<dbReference type="PIRSF" id="PIRSF000827">
    <property type="entry name" value="RdRPol_OMV"/>
    <property type="match status" value="1"/>
</dbReference>
<dbReference type="PROSITE" id="PS50525">
    <property type="entry name" value="RDRP_SSRNA_NEG_SEG"/>
    <property type="match status" value="1"/>
</dbReference>
<gene>
    <name evidence="2" type="primary">PB1</name>
</gene>
<name>RDRP_I81A4</name>
<sequence>MDVNPTLLFLKVPAQNAISTTFPYTGDPPYSHGTGTGYTMDTVNRTHQYSERGKWTINTETGAPQLNPIDGPLPEDNEPTGYAQTDCVLEAMAFLEKSHPGIFENSCLETMEVIQQTRVDKLTQGRQTFDWTLNRNQPAATALANTIEVFRLNGLTTSESGRLIDFLKDVMESMDKEEMEIVTHFQRKRRVRDNMTKKMVTQRTIGKKKQKLNKRGYLIRALTLNTMTKDAERGKLKRRAIATPGMQIRGFVYFVETLARSICEKLEQSGLPVGGNEKKAKLANVVRKMMTNSQDTELSFTITGDNTKWNENQNPRMFLAMITYITRNQPEWFRNVLSVAPIMFSNKMARLGKGYMFESKNMKLRTQIPAEMLSGIDLRYFNDSTRKKIEKIRPLLIEGAASLSPGMMMGMFNMLSTVLGVSILNLGQKEYTKTAYWWDGLQSSDDFALIVNAPNHEGIQAGVDRFYRTCKLLGINMSKKKSYINRTGTFEFTSFFYRYGFVANFSMELPSFGVSGINESADMSIGVTVIKNNMINNDLGPATAQMALQLFIKDYRYTYRCHRGDTQIQTRRSFEIKKLWDQTRSKAGLLVSDGGPNLYNIRNLHIPEVCLKWELMDKDYQGRLCNPLNPFVSHKEIESVNNAVVMPSHGPAKTMEYDAVATTHSWVPKRNRSILNTSQRGILEDEQMYQKCCNLFEKFFPSSSYRRPVGISSMVEAMVSRARIDARIDFESGRIKKEDFAEIMKICSTIEDLRRQK</sequence>
<organism>
    <name type="scientific">Influenza A virus (strain A/Swine/Ontario/2/1981 H1N1)</name>
    <dbReference type="NCBI Taxonomy" id="384501"/>
    <lineage>
        <taxon>Viruses</taxon>
        <taxon>Riboviria</taxon>
        <taxon>Orthornavirae</taxon>
        <taxon>Negarnaviricota</taxon>
        <taxon>Polyploviricotina</taxon>
        <taxon>Insthoviricetes</taxon>
        <taxon>Articulavirales</taxon>
        <taxon>Orthomyxoviridae</taxon>
        <taxon>Alphainfluenzavirus</taxon>
        <taxon>Alphainfluenzavirus influenzae</taxon>
        <taxon>Influenza A virus</taxon>
    </lineage>
</organism>
<organismHost>
    <name type="scientific">Aves</name>
    <dbReference type="NCBI Taxonomy" id="8782"/>
</organismHost>
<organismHost>
    <name type="scientific">Homo sapiens</name>
    <name type="common">Human</name>
    <dbReference type="NCBI Taxonomy" id="9606"/>
</organismHost>
<organismHost>
    <name type="scientific">Sus scrofa</name>
    <name type="common">Pig</name>
    <dbReference type="NCBI Taxonomy" id="9823"/>
</organismHost>
<protein>
    <recommendedName>
        <fullName evidence="2">RNA-directed RNA polymerase catalytic subunit</fullName>
        <ecNumber evidence="2">2.7.7.48</ecNumber>
    </recommendedName>
    <alternativeName>
        <fullName evidence="2">Polymerase basic protein 1</fullName>
        <shortName evidence="2">PB1</shortName>
    </alternativeName>
    <alternativeName>
        <fullName evidence="2">RNA-directed RNA polymerase subunit P1</fullName>
    </alternativeName>
</protein>
<comment type="function">
    <text evidence="2">RNA-dependent RNA polymerase which is responsible for replication and transcription of virus RNA segments. The transcription of viral mRNAs occurs by a unique mechanism called cap-snatching. 5' methylated caps of cellular mRNAs are cleaved after 10-13 nucleotides by PA. In turn, these short capped RNAs are used as primers by PB1 for transcription of viral mRNAs. During virus replication, PB1 initiates RNA synthesis and copy vRNA into complementary RNA (cRNA) which in turn serves as a template for the production of more vRNAs.</text>
</comment>
<comment type="catalytic activity">
    <reaction evidence="2">
        <text>RNA(n) + a ribonucleoside 5'-triphosphate = RNA(n+1) + diphosphate</text>
        <dbReference type="Rhea" id="RHEA:21248"/>
        <dbReference type="Rhea" id="RHEA-COMP:14527"/>
        <dbReference type="Rhea" id="RHEA-COMP:17342"/>
        <dbReference type="ChEBI" id="CHEBI:33019"/>
        <dbReference type="ChEBI" id="CHEBI:61557"/>
        <dbReference type="ChEBI" id="CHEBI:140395"/>
        <dbReference type="EC" id="2.7.7.48"/>
    </reaction>
</comment>
<comment type="subunit">
    <text evidence="1 2">Influenza RNA polymerase is composed of three subunits: PB1, PB2 and PA. Interacts (via N-terminus) with PA (via C-terminus). Interacts (via C-terminus) with PB2 (via N-terminus); this interaction is essential for transcription initiation. Interacts (via C-terminus) with human PKP2 (via N-terminus); the interaction competitively inhibits the interaction between the RNA polymerase subunits PB1 and PB2 (By similarity).</text>
</comment>
<comment type="subcellular location">
    <subcellularLocation>
        <location evidence="2">Host nucleus</location>
    </subcellularLocation>
    <subcellularLocation>
        <location evidence="2">Host cytoplasm</location>
    </subcellularLocation>
</comment>
<comment type="PTM">
    <text evidence="2">Phosphorylated by host PRKCA.</text>
</comment>
<comment type="similarity">
    <text evidence="2">Belongs to the influenza viruses polymerase PB1 family.</text>
</comment>
<evidence type="ECO:0000250" key="1">
    <source>
        <dbReference type="UniProtKB" id="P03431"/>
    </source>
</evidence>
<evidence type="ECO:0000255" key="2">
    <source>
        <dbReference type="HAMAP-Rule" id="MF_04065"/>
    </source>
</evidence>
<proteinExistence type="inferred from homology"/>
<keyword id="KW-1262">Eukaryotic host gene expression shutoff by virus</keyword>
<keyword id="KW-1191">Eukaryotic host transcription shutoff by virus</keyword>
<keyword id="KW-1035">Host cytoplasm</keyword>
<keyword id="KW-1190">Host gene expression shutoff by virus</keyword>
<keyword id="KW-1048">Host nucleus</keyword>
<keyword id="KW-0945">Host-virus interaction</keyword>
<keyword id="KW-1104">Inhibition of host RNA polymerase II by virus</keyword>
<keyword id="KW-0547">Nucleotide-binding</keyword>
<keyword id="KW-0548">Nucleotidyltransferase</keyword>
<keyword id="KW-0597">Phosphoprotein</keyword>
<keyword id="KW-0696">RNA-directed RNA polymerase</keyword>
<keyword id="KW-0808">Transferase</keyword>
<keyword id="KW-0693">Viral RNA replication</keyword>
<keyword id="KW-1195">Viral transcription</keyword>